<dbReference type="EMBL" id="AJ554056">
    <property type="protein sequence ID" value="CAD87961.1"/>
    <property type="molecule type" value="Genomic_DNA"/>
</dbReference>
<dbReference type="RefSeq" id="NP_944684.1">
    <property type="nucleotide sequence ID" value="NC_005273.1"/>
</dbReference>
<dbReference type="SMR" id="Q70RW3"/>
<dbReference type="GeneID" id="2658820"/>
<dbReference type="CTD" id="4519"/>
<dbReference type="GO" id="GO:0005743">
    <property type="term" value="C:mitochondrial inner membrane"/>
    <property type="evidence" value="ECO:0007669"/>
    <property type="project" value="UniProtKB-SubCell"/>
</dbReference>
<dbReference type="GO" id="GO:0045275">
    <property type="term" value="C:respiratory chain complex III"/>
    <property type="evidence" value="ECO:0007669"/>
    <property type="project" value="InterPro"/>
</dbReference>
<dbReference type="GO" id="GO:0046872">
    <property type="term" value="F:metal ion binding"/>
    <property type="evidence" value="ECO:0007669"/>
    <property type="project" value="UniProtKB-KW"/>
</dbReference>
<dbReference type="GO" id="GO:0008121">
    <property type="term" value="F:ubiquinol-cytochrome-c reductase activity"/>
    <property type="evidence" value="ECO:0007669"/>
    <property type="project" value="InterPro"/>
</dbReference>
<dbReference type="GO" id="GO:0006122">
    <property type="term" value="P:mitochondrial electron transport, ubiquinol to cytochrome c"/>
    <property type="evidence" value="ECO:0007669"/>
    <property type="project" value="TreeGrafter"/>
</dbReference>
<dbReference type="CDD" id="cd00290">
    <property type="entry name" value="cytochrome_b_C"/>
    <property type="match status" value="1"/>
</dbReference>
<dbReference type="CDD" id="cd00284">
    <property type="entry name" value="Cytochrome_b_N"/>
    <property type="match status" value="1"/>
</dbReference>
<dbReference type="FunFam" id="1.20.810.10:FF:000002">
    <property type="entry name" value="Cytochrome b"/>
    <property type="match status" value="1"/>
</dbReference>
<dbReference type="Gene3D" id="1.20.810.10">
    <property type="entry name" value="Cytochrome Bc1 Complex, Chain C"/>
    <property type="match status" value="1"/>
</dbReference>
<dbReference type="InterPro" id="IPR005798">
    <property type="entry name" value="Cyt_b/b6_C"/>
</dbReference>
<dbReference type="InterPro" id="IPR036150">
    <property type="entry name" value="Cyt_b/b6_C_sf"/>
</dbReference>
<dbReference type="InterPro" id="IPR005797">
    <property type="entry name" value="Cyt_b/b6_N"/>
</dbReference>
<dbReference type="InterPro" id="IPR027387">
    <property type="entry name" value="Cytb/b6-like_sf"/>
</dbReference>
<dbReference type="InterPro" id="IPR030689">
    <property type="entry name" value="Cytochrome_b"/>
</dbReference>
<dbReference type="InterPro" id="IPR048260">
    <property type="entry name" value="Cytochrome_b_C_euk/bac"/>
</dbReference>
<dbReference type="InterPro" id="IPR048259">
    <property type="entry name" value="Cytochrome_b_N_euk/bac"/>
</dbReference>
<dbReference type="InterPro" id="IPR016174">
    <property type="entry name" value="Di-haem_cyt_TM"/>
</dbReference>
<dbReference type="PANTHER" id="PTHR19271">
    <property type="entry name" value="CYTOCHROME B"/>
    <property type="match status" value="1"/>
</dbReference>
<dbReference type="PANTHER" id="PTHR19271:SF16">
    <property type="entry name" value="CYTOCHROME B"/>
    <property type="match status" value="1"/>
</dbReference>
<dbReference type="Pfam" id="PF00032">
    <property type="entry name" value="Cytochrom_B_C"/>
    <property type="match status" value="1"/>
</dbReference>
<dbReference type="Pfam" id="PF00033">
    <property type="entry name" value="Cytochrome_B"/>
    <property type="match status" value="1"/>
</dbReference>
<dbReference type="PIRSF" id="PIRSF038885">
    <property type="entry name" value="COB"/>
    <property type="match status" value="1"/>
</dbReference>
<dbReference type="SUPFAM" id="SSF81648">
    <property type="entry name" value="a domain/subunit of cytochrome bc1 complex (Ubiquinol-cytochrome c reductase)"/>
    <property type="match status" value="1"/>
</dbReference>
<dbReference type="SUPFAM" id="SSF81342">
    <property type="entry name" value="Transmembrane di-heme cytochromes"/>
    <property type="match status" value="1"/>
</dbReference>
<dbReference type="PROSITE" id="PS51003">
    <property type="entry name" value="CYTB_CTER"/>
    <property type="match status" value="1"/>
</dbReference>
<dbReference type="PROSITE" id="PS51002">
    <property type="entry name" value="CYTB_NTER"/>
    <property type="match status" value="1"/>
</dbReference>
<accession>Q70RW3</accession>
<keyword id="KW-0249">Electron transport</keyword>
<keyword id="KW-0349">Heme</keyword>
<keyword id="KW-0408">Iron</keyword>
<keyword id="KW-0472">Membrane</keyword>
<keyword id="KW-0479">Metal-binding</keyword>
<keyword id="KW-0496">Mitochondrion</keyword>
<keyword id="KW-0999">Mitochondrion inner membrane</keyword>
<keyword id="KW-0679">Respiratory chain</keyword>
<keyword id="KW-0812">Transmembrane</keyword>
<keyword id="KW-1133">Transmembrane helix</keyword>
<keyword id="KW-0813">Transport</keyword>
<keyword id="KW-0830">Ubiquinone</keyword>
<evidence type="ECO:0000250" key="1"/>
<evidence type="ECO:0000250" key="2">
    <source>
        <dbReference type="UniProtKB" id="P00157"/>
    </source>
</evidence>
<evidence type="ECO:0000255" key="3">
    <source>
        <dbReference type="PROSITE-ProRule" id="PRU00967"/>
    </source>
</evidence>
<evidence type="ECO:0000255" key="4">
    <source>
        <dbReference type="PROSITE-ProRule" id="PRU00968"/>
    </source>
</evidence>
<geneLocation type="mitochondrion"/>
<proteinExistence type="inferred from homology"/>
<sequence>MINIRKTHPLMKIINNTFIDLPTPSNISSWWNFGSLLGLCLITQILTGLFLAMHYTPDTTTAFSSIAHICRDVNYGWVIRYLHANGASMFFICLYAHIGRGLYYGSYIFLETWNIGVILLFTVMATAFMGYVLPWGQMSFWGATVITNLLSAIPYIGTTLVEWIWGGFSVDKATLTRFFALHFILPFIILALAIVHLLFLHETGSNNPTGIPSDMDKIPFHPYYTIKDTLGALLLILVLLTLTLFAPDLLGDPDNYTPANPLSTPAHIKPEWYFLFAYAILRSIPNKLGGVLALLLSILILLFIPLLHTSKQRSMMFRPFSQLLFWLLIADFLTLTWIGGQPVEHPYMIMGQLASMLYFLLILVLMPMASLIENKLLKW</sequence>
<protein>
    <recommendedName>
        <fullName>Cytochrome b</fullName>
    </recommendedName>
    <alternativeName>
        <fullName>Complex III subunit 3</fullName>
    </alternativeName>
    <alternativeName>
        <fullName>Complex III subunit III</fullName>
    </alternativeName>
    <alternativeName>
        <fullName>Cytochrome b-c1 complex subunit 3</fullName>
    </alternativeName>
    <alternativeName>
        <fullName>Ubiquinol-cytochrome-c reductase complex cytochrome b subunit</fullName>
    </alternativeName>
</protein>
<gene>
    <name type="primary">MT-CYB</name>
    <name type="synonym">COB</name>
    <name type="synonym">CYTB</name>
    <name type="synonym">MTCYB</name>
</gene>
<feature type="chain" id="PRO_0000254698" description="Cytochrome b">
    <location>
        <begin position="1"/>
        <end position="379"/>
    </location>
</feature>
<feature type="transmembrane region" description="Helical" evidence="2">
    <location>
        <begin position="33"/>
        <end position="53"/>
    </location>
</feature>
<feature type="transmembrane region" description="Helical" evidence="2">
    <location>
        <begin position="77"/>
        <end position="98"/>
    </location>
</feature>
<feature type="transmembrane region" description="Helical" evidence="2">
    <location>
        <begin position="113"/>
        <end position="133"/>
    </location>
</feature>
<feature type="transmembrane region" description="Helical" evidence="2">
    <location>
        <begin position="178"/>
        <end position="198"/>
    </location>
</feature>
<feature type="transmembrane region" description="Helical" evidence="2">
    <location>
        <begin position="226"/>
        <end position="246"/>
    </location>
</feature>
<feature type="transmembrane region" description="Helical" evidence="2">
    <location>
        <begin position="288"/>
        <end position="308"/>
    </location>
</feature>
<feature type="transmembrane region" description="Helical" evidence="2">
    <location>
        <begin position="320"/>
        <end position="340"/>
    </location>
</feature>
<feature type="transmembrane region" description="Helical" evidence="2">
    <location>
        <begin position="347"/>
        <end position="367"/>
    </location>
</feature>
<feature type="binding site" description="axial binding residue" evidence="2">
    <location>
        <position position="83"/>
    </location>
    <ligand>
        <name>heme b</name>
        <dbReference type="ChEBI" id="CHEBI:60344"/>
        <label>b562</label>
    </ligand>
    <ligandPart>
        <name>Fe</name>
        <dbReference type="ChEBI" id="CHEBI:18248"/>
    </ligandPart>
</feature>
<feature type="binding site" description="axial binding residue" evidence="2">
    <location>
        <position position="97"/>
    </location>
    <ligand>
        <name>heme b</name>
        <dbReference type="ChEBI" id="CHEBI:60344"/>
        <label>b566</label>
    </ligand>
    <ligandPart>
        <name>Fe</name>
        <dbReference type="ChEBI" id="CHEBI:18248"/>
    </ligandPart>
</feature>
<feature type="binding site" description="axial binding residue" evidence="2">
    <location>
        <position position="182"/>
    </location>
    <ligand>
        <name>heme b</name>
        <dbReference type="ChEBI" id="CHEBI:60344"/>
        <label>b562</label>
    </ligand>
    <ligandPart>
        <name>Fe</name>
        <dbReference type="ChEBI" id="CHEBI:18248"/>
    </ligandPart>
</feature>
<feature type="binding site" description="axial binding residue" evidence="2">
    <location>
        <position position="196"/>
    </location>
    <ligand>
        <name>heme b</name>
        <dbReference type="ChEBI" id="CHEBI:60344"/>
        <label>b566</label>
    </ligand>
    <ligandPart>
        <name>Fe</name>
        <dbReference type="ChEBI" id="CHEBI:18248"/>
    </ligandPart>
</feature>
<feature type="binding site" evidence="2">
    <location>
        <position position="201"/>
    </location>
    <ligand>
        <name>a ubiquinone</name>
        <dbReference type="ChEBI" id="CHEBI:16389"/>
    </ligand>
</feature>
<comment type="function">
    <text evidence="2">Component of the ubiquinol-cytochrome c reductase complex (complex III or cytochrome b-c1 complex) that is part of the mitochondrial respiratory chain. The b-c1 complex mediates electron transfer from ubiquinol to cytochrome c. Contributes to the generation of a proton gradient across the mitochondrial membrane that is then used for ATP synthesis.</text>
</comment>
<comment type="cofactor">
    <cofactor evidence="2">
        <name>heme b</name>
        <dbReference type="ChEBI" id="CHEBI:60344"/>
    </cofactor>
    <text evidence="2">Binds 2 heme b groups non-covalently.</text>
</comment>
<comment type="subunit">
    <text evidence="2">The cytochrome bc1 complex contains 11 subunits: 3 respiratory subunits (MT-CYB, CYC1 and UQCRFS1), 2 core proteins (UQCRC1 and UQCRC2) and 6 low-molecular weight proteins (UQCRH/QCR6, UQCRB/QCR7, UQCRQ/QCR8, UQCR10/QCR9, UQCR11/QCR10 and a cleavage product of UQCRFS1). This cytochrome bc1 complex then forms a dimer.</text>
</comment>
<comment type="subcellular location">
    <subcellularLocation>
        <location evidence="2">Mitochondrion inner membrane</location>
        <topology evidence="2">Multi-pass membrane protein</topology>
    </subcellularLocation>
</comment>
<comment type="miscellaneous">
    <text evidence="1">Heme 1 (or BL or b562) is low-potential and absorbs at about 562 nm, and heme 2 (or BH or b566) is high-potential and absorbs at about 566 nm.</text>
</comment>
<comment type="similarity">
    <text evidence="3 4">Belongs to the cytochrome b family.</text>
</comment>
<comment type="caution">
    <text evidence="2">The full-length protein contains only eight transmembrane helices, not nine as predicted by bioinformatics tools.</text>
</comment>
<reference key="1">
    <citation type="journal article" date="2004" name="Gene">
        <title>Mitogenomic analyses provide new insights into cetacean origin and evolution.</title>
        <authorList>
            <person name="Arnason U."/>
            <person name="Gullberg A."/>
            <person name="Janke A."/>
        </authorList>
    </citation>
    <scope>NUCLEOTIDE SEQUENCE [GENOMIC DNA]</scope>
</reference>
<name>CYB_HYPAP</name>
<organism>
    <name type="scientific">Hyperoodon ampullatus</name>
    <name type="common">Northern bottlenose whale</name>
    <dbReference type="NCBI Taxonomy" id="48744"/>
    <lineage>
        <taxon>Eukaryota</taxon>
        <taxon>Metazoa</taxon>
        <taxon>Chordata</taxon>
        <taxon>Craniata</taxon>
        <taxon>Vertebrata</taxon>
        <taxon>Euteleostomi</taxon>
        <taxon>Mammalia</taxon>
        <taxon>Eutheria</taxon>
        <taxon>Laurasiatheria</taxon>
        <taxon>Artiodactyla</taxon>
        <taxon>Whippomorpha</taxon>
        <taxon>Cetacea</taxon>
        <taxon>Odontoceti</taxon>
        <taxon>Ziphiidae</taxon>
        <taxon>Hyperoodon</taxon>
    </lineage>
</organism>